<sequence>MQLNSTEISDLIKQRIEQFEVVSESRNEGTIVAVSDGIIRIHGLADVMQGEMIELPGNRFAIALNLERDSVGAVVMGPYADLAEGVKVKTTGRILEVPVGRGLLGRVVNTLGEPIDGKGPIDNDGFSPVEVIAPGVIERQSVSQPVQTGYKAVDAMIPIGRGQRELIIGDRQTGKTAMAIDAIINQKDSGIKCVYVAIGQKASTIANVVRKLEEHGALANTIVVVATASEAAALQFLAPYSGCSMGEYFRDRGEDALIVYDDLSKQAVAYRQISLLLKRPPGREAYPGDVFYLHSRLLERASRVNEIYVEKFTKGAVTGKTGSLTALPIIETQAGDVSAFVPTNVISITDGQIFLETDLFNSGLRPAVNPGISVSRVGGAAQTKIIKKLSGGIRTALAQYRELAAFSQFASDLDDATRAQLEHGVRVTELMKQKQYAPMSVAAQSVSIFAAEKGYLKSVELKKVGDFEAALLSFMNSEHAALMKLINETGDYNAEIEAELKAGLDKFVATQTW</sequence>
<reference key="1">
    <citation type="submission" date="2006-12" db="EMBL/GenBank/DDBJ databases">
        <title>Complete sequence of Shewanella sp. W3-18-1.</title>
        <authorList>
            <consortium name="US DOE Joint Genome Institute"/>
            <person name="Copeland A."/>
            <person name="Lucas S."/>
            <person name="Lapidus A."/>
            <person name="Barry K."/>
            <person name="Detter J.C."/>
            <person name="Glavina del Rio T."/>
            <person name="Hammon N."/>
            <person name="Israni S."/>
            <person name="Dalin E."/>
            <person name="Tice H."/>
            <person name="Pitluck S."/>
            <person name="Chain P."/>
            <person name="Malfatti S."/>
            <person name="Shin M."/>
            <person name="Vergez L."/>
            <person name="Schmutz J."/>
            <person name="Larimer F."/>
            <person name="Land M."/>
            <person name="Hauser L."/>
            <person name="Kyrpides N."/>
            <person name="Lykidis A."/>
            <person name="Tiedje J."/>
            <person name="Richardson P."/>
        </authorList>
    </citation>
    <scope>NUCLEOTIDE SEQUENCE [LARGE SCALE GENOMIC DNA]</scope>
    <source>
        <strain>W3-18-1</strain>
    </source>
</reference>
<proteinExistence type="inferred from homology"/>
<evidence type="ECO:0000255" key="1">
    <source>
        <dbReference type="HAMAP-Rule" id="MF_01346"/>
    </source>
</evidence>
<feature type="chain" id="PRO_0000302702" description="ATP synthase subunit alpha">
    <location>
        <begin position="1"/>
        <end position="513"/>
    </location>
</feature>
<feature type="binding site" evidence="1">
    <location>
        <begin position="169"/>
        <end position="176"/>
    </location>
    <ligand>
        <name>ATP</name>
        <dbReference type="ChEBI" id="CHEBI:30616"/>
    </ligand>
</feature>
<feature type="site" description="Required for activity" evidence="1">
    <location>
        <position position="373"/>
    </location>
</feature>
<name>ATPA_SHESW</name>
<dbReference type="EC" id="7.1.2.2" evidence="1"/>
<dbReference type="EMBL" id="CP000503">
    <property type="protein sequence ID" value="ABM26857.1"/>
    <property type="molecule type" value="Genomic_DNA"/>
</dbReference>
<dbReference type="RefSeq" id="WP_011791278.1">
    <property type="nucleotide sequence ID" value="NC_008750.1"/>
</dbReference>
<dbReference type="SMR" id="A1RQB2"/>
<dbReference type="GeneID" id="67445463"/>
<dbReference type="KEGG" id="shw:Sputw3181_4055"/>
<dbReference type="HOGENOM" id="CLU_010091_2_1_6"/>
<dbReference type="Proteomes" id="UP000002597">
    <property type="component" value="Chromosome"/>
</dbReference>
<dbReference type="GO" id="GO:0005886">
    <property type="term" value="C:plasma membrane"/>
    <property type="evidence" value="ECO:0007669"/>
    <property type="project" value="UniProtKB-SubCell"/>
</dbReference>
<dbReference type="GO" id="GO:0045259">
    <property type="term" value="C:proton-transporting ATP synthase complex"/>
    <property type="evidence" value="ECO:0007669"/>
    <property type="project" value="UniProtKB-KW"/>
</dbReference>
<dbReference type="GO" id="GO:0043531">
    <property type="term" value="F:ADP binding"/>
    <property type="evidence" value="ECO:0007669"/>
    <property type="project" value="TreeGrafter"/>
</dbReference>
<dbReference type="GO" id="GO:0005524">
    <property type="term" value="F:ATP binding"/>
    <property type="evidence" value="ECO:0007669"/>
    <property type="project" value="UniProtKB-UniRule"/>
</dbReference>
<dbReference type="GO" id="GO:0046933">
    <property type="term" value="F:proton-transporting ATP synthase activity, rotational mechanism"/>
    <property type="evidence" value="ECO:0007669"/>
    <property type="project" value="UniProtKB-UniRule"/>
</dbReference>
<dbReference type="CDD" id="cd18113">
    <property type="entry name" value="ATP-synt_F1_alpha_C"/>
    <property type="match status" value="1"/>
</dbReference>
<dbReference type="CDD" id="cd18116">
    <property type="entry name" value="ATP-synt_F1_alpha_N"/>
    <property type="match status" value="1"/>
</dbReference>
<dbReference type="CDD" id="cd01132">
    <property type="entry name" value="F1-ATPase_alpha_CD"/>
    <property type="match status" value="1"/>
</dbReference>
<dbReference type="FunFam" id="1.20.150.20:FF:000001">
    <property type="entry name" value="ATP synthase subunit alpha"/>
    <property type="match status" value="1"/>
</dbReference>
<dbReference type="FunFam" id="2.40.30.20:FF:000001">
    <property type="entry name" value="ATP synthase subunit alpha"/>
    <property type="match status" value="1"/>
</dbReference>
<dbReference type="FunFam" id="3.40.50.300:FF:000002">
    <property type="entry name" value="ATP synthase subunit alpha"/>
    <property type="match status" value="1"/>
</dbReference>
<dbReference type="Gene3D" id="2.40.30.20">
    <property type="match status" value="1"/>
</dbReference>
<dbReference type="Gene3D" id="1.20.150.20">
    <property type="entry name" value="ATP synthase alpha/beta chain, C-terminal domain"/>
    <property type="match status" value="1"/>
</dbReference>
<dbReference type="Gene3D" id="3.40.50.300">
    <property type="entry name" value="P-loop containing nucleotide triphosphate hydrolases"/>
    <property type="match status" value="1"/>
</dbReference>
<dbReference type="HAMAP" id="MF_01346">
    <property type="entry name" value="ATP_synth_alpha_bact"/>
    <property type="match status" value="1"/>
</dbReference>
<dbReference type="InterPro" id="IPR023366">
    <property type="entry name" value="ATP_synth_asu-like_sf"/>
</dbReference>
<dbReference type="InterPro" id="IPR000793">
    <property type="entry name" value="ATP_synth_asu_C"/>
</dbReference>
<dbReference type="InterPro" id="IPR038376">
    <property type="entry name" value="ATP_synth_asu_C_sf"/>
</dbReference>
<dbReference type="InterPro" id="IPR033732">
    <property type="entry name" value="ATP_synth_F1_a_nt-bd_dom"/>
</dbReference>
<dbReference type="InterPro" id="IPR005294">
    <property type="entry name" value="ATP_synth_F1_asu"/>
</dbReference>
<dbReference type="InterPro" id="IPR020003">
    <property type="entry name" value="ATPase_a/bsu_AS"/>
</dbReference>
<dbReference type="InterPro" id="IPR004100">
    <property type="entry name" value="ATPase_F1/V1/A1_a/bsu_N"/>
</dbReference>
<dbReference type="InterPro" id="IPR036121">
    <property type="entry name" value="ATPase_F1/V1/A1_a/bsu_N_sf"/>
</dbReference>
<dbReference type="InterPro" id="IPR000194">
    <property type="entry name" value="ATPase_F1/V1/A1_a/bsu_nucl-bd"/>
</dbReference>
<dbReference type="InterPro" id="IPR027417">
    <property type="entry name" value="P-loop_NTPase"/>
</dbReference>
<dbReference type="NCBIfam" id="TIGR00962">
    <property type="entry name" value="atpA"/>
    <property type="match status" value="1"/>
</dbReference>
<dbReference type="NCBIfam" id="NF009884">
    <property type="entry name" value="PRK13343.1"/>
    <property type="match status" value="1"/>
</dbReference>
<dbReference type="PANTHER" id="PTHR48082">
    <property type="entry name" value="ATP SYNTHASE SUBUNIT ALPHA, MITOCHONDRIAL"/>
    <property type="match status" value="1"/>
</dbReference>
<dbReference type="PANTHER" id="PTHR48082:SF2">
    <property type="entry name" value="ATP SYNTHASE SUBUNIT ALPHA, MITOCHONDRIAL"/>
    <property type="match status" value="1"/>
</dbReference>
<dbReference type="Pfam" id="PF00006">
    <property type="entry name" value="ATP-synt_ab"/>
    <property type="match status" value="1"/>
</dbReference>
<dbReference type="Pfam" id="PF00306">
    <property type="entry name" value="ATP-synt_ab_C"/>
    <property type="match status" value="1"/>
</dbReference>
<dbReference type="Pfam" id="PF02874">
    <property type="entry name" value="ATP-synt_ab_N"/>
    <property type="match status" value="1"/>
</dbReference>
<dbReference type="SUPFAM" id="SSF47917">
    <property type="entry name" value="C-terminal domain of alpha and beta subunits of F1 ATP synthase"/>
    <property type="match status" value="1"/>
</dbReference>
<dbReference type="SUPFAM" id="SSF50615">
    <property type="entry name" value="N-terminal domain of alpha and beta subunits of F1 ATP synthase"/>
    <property type="match status" value="1"/>
</dbReference>
<dbReference type="SUPFAM" id="SSF52540">
    <property type="entry name" value="P-loop containing nucleoside triphosphate hydrolases"/>
    <property type="match status" value="1"/>
</dbReference>
<dbReference type="PROSITE" id="PS00152">
    <property type="entry name" value="ATPASE_ALPHA_BETA"/>
    <property type="match status" value="1"/>
</dbReference>
<gene>
    <name evidence="1" type="primary">atpA</name>
    <name type="ordered locus">Sputw3181_4055</name>
</gene>
<accession>A1RQB2</accession>
<keyword id="KW-0066">ATP synthesis</keyword>
<keyword id="KW-0067">ATP-binding</keyword>
<keyword id="KW-0997">Cell inner membrane</keyword>
<keyword id="KW-1003">Cell membrane</keyword>
<keyword id="KW-0139">CF(1)</keyword>
<keyword id="KW-0375">Hydrogen ion transport</keyword>
<keyword id="KW-0406">Ion transport</keyword>
<keyword id="KW-0472">Membrane</keyword>
<keyword id="KW-0547">Nucleotide-binding</keyword>
<keyword id="KW-1278">Translocase</keyword>
<keyword id="KW-0813">Transport</keyword>
<protein>
    <recommendedName>
        <fullName evidence="1">ATP synthase subunit alpha</fullName>
        <ecNumber evidence="1">7.1.2.2</ecNumber>
    </recommendedName>
    <alternativeName>
        <fullName evidence="1">ATP synthase F1 sector subunit alpha</fullName>
    </alternativeName>
    <alternativeName>
        <fullName evidence="1">F-ATPase subunit alpha</fullName>
    </alternativeName>
</protein>
<organism>
    <name type="scientific">Shewanella sp. (strain W3-18-1)</name>
    <dbReference type="NCBI Taxonomy" id="351745"/>
    <lineage>
        <taxon>Bacteria</taxon>
        <taxon>Pseudomonadati</taxon>
        <taxon>Pseudomonadota</taxon>
        <taxon>Gammaproteobacteria</taxon>
        <taxon>Alteromonadales</taxon>
        <taxon>Shewanellaceae</taxon>
        <taxon>Shewanella</taxon>
    </lineage>
</organism>
<comment type="function">
    <text evidence="1">Produces ATP from ADP in the presence of a proton gradient across the membrane. The alpha chain is a regulatory subunit.</text>
</comment>
<comment type="catalytic activity">
    <reaction evidence="1">
        <text>ATP + H2O + 4 H(+)(in) = ADP + phosphate + 5 H(+)(out)</text>
        <dbReference type="Rhea" id="RHEA:57720"/>
        <dbReference type="ChEBI" id="CHEBI:15377"/>
        <dbReference type="ChEBI" id="CHEBI:15378"/>
        <dbReference type="ChEBI" id="CHEBI:30616"/>
        <dbReference type="ChEBI" id="CHEBI:43474"/>
        <dbReference type="ChEBI" id="CHEBI:456216"/>
        <dbReference type="EC" id="7.1.2.2"/>
    </reaction>
</comment>
<comment type="subunit">
    <text evidence="1">F-type ATPases have 2 components, CF(1) - the catalytic core - and CF(0) - the membrane proton channel. CF(1) has five subunits: alpha(3), beta(3), gamma(1), delta(1), epsilon(1). CF(0) has three main subunits: a(1), b(2) and c(9-12). The alpha and beta chains form an alternating ring which encloses part of the gamma chain. CF(1) is attached to CF(0) by a central stalk formed by the gamma and epsilon chains, while a peripheral stalk is formed by the delta and b chains.</text>
</comment>
<comment type="subcellular location">
    <subcellularLocation>
        <location evidence="1">Cell inner membrane</location>
        <topology evidence="1">Peripheral membrane protein</topology>
    </subcellularLocation>
</comment>
<comment type="similarity">
    <text evidence="1">Belongs to the ATPase alpha/beta chains family.</text>
</comment>